<evidence type="ECO:0000255" key="1">
    <source>
        <dbReference type="HAMAP-Rule" id="MF_00746"/>
    </source>
</evidence>
<protein>
    <recommendedName>
        <fullName evidence="1">Protein SprT</fullName>
    </recommendedName>
</protein>
<comment type="cofactor">
    <cofactor evidence="1">
        <name>Zn(2+)</name>
        <dbReference type="ChEBI" id="CHEBI:29105"/>
    </cofactor>
    <text evidence="1">Binds 1 zinc ion.</text>
</comment>
<comment type="subcellular location">
    <subcellularLocation>
        <location evidence="1">Cytoplasm</location>
    </subcellularLocation>
</comment>
<comment type="similarity">
    <text evidence="1">Belongs to the SprT family.</text>
</comment>
<feature type="chain" id="PRO_1000046526" description="Protein SprT">
    <location>
        <begin position="1"/>
        <end position="165"/>
    </location>
</feature>
<feature type="domain" description="SprT-like" evidence="1">
    <location>
        <begin position="20"/>
        <end position="163"/>
    </location>
</feature>
<feature type="active site" evidence="1">
    <location>
        <position position="79"/>
    </location>
</feature>
<feature type="binding site" evidence="1">
    <location>
        <position position="78"/>
    </location>
    <ligand>
        <name>Zn(2+)</name>
        <dbReference type="ChEBI" id="CHEBI:29105"/>
    </ligand>
</feature>
<feature type="binding site" evidence="1">
    <location>
        <position position="82"/>
    </location>
    <ligand>
        <name>Zn(2+)</name>
        <dbReference type="ChEBI" id="CHEBI:29105"/>
    </ligand>
</feature>
<keyword id="KW-0963">Cytoplasm</keyword>
<keyword id="KW-0479">Metal-binding</keyword>
<keyword id="KW-0862">Zinc</keyword>
<organism>
    <name type="scientific">Escherichia coli (strain UTI89 / UPEC)</name>
    <dbReference type="NCBI Taxonomy" id="364106"/>
    <lineage>
        <taxon>Bacteria</taxon>
        <taxon>Pseudomonadati</taxon>
        <taxon>Pseudomonadota</taxon>
        <taxon>Gammaproteobacteria</taxon>
        <taxon>Enterobacterales</taxon>
        <taxon>Enterobacteriaceae</taxon>
        <taxon>Escherichia</taxon>
    </lineage>
</organism>
<proteinExistence type="inferred from homology"/>
<reference key="1">
    <citation type="journal article" date="2006" name="Proc. Natl. Acad. Sci. U.S.A.">
        <title>Identification of genes subject to positive selection in uropathogenic strains of Escherichia coli: a comparative genomics approach.</title>
        <authorList>
            <person name="Chen S.L."/>
            <person name="Hung C.-S."/>
            <person name="Xu J."/>
            <person name="Reigstad C.S."/>
            <person name="Magrini V."/>
            <person name="Sabo A."/>
            <person name="Blasiar D."/>
            <person name="Bieri T."/>
            <person name="Meyer R.R."/>
            <person name="Ozersky P."/>
            <person name="Armstrong J.R."/>
            <person name="Fulton R.S."/>
            <person name="Latreille J.P."/>
            <person name="Spieth J."/>
            <person name="Hooton T.M."/>
            <person name="Mardis E.R."/>
            <person name="Hultgren S.J."/>
            <person name="Gordon J.I."/>
        </authorList>
    </citation>
    <scope>NUCLEOTIDE SEQUENCE [LARGE SCALE GENOMIC DNA]</scope>
    <source>
        <strain>UTI89 / UPEC</strain>
    </source>
</reference>
<sequence length="165" mass="19321">MKTSRLPIAIQQAVMRRLREKLAQANLKLGRNYPEPKLSYTQRGTSAGTAWLESYEIRLNPVLLLENSEAFIEEVVPHELAHLLVWKHFGRVAPHGKEWKWMMESVLGVPARRTHQFELQSVRRNTFPYRCKCQEHQLTVRRHNRVVRGEAVYRCVHCGEQLVAK</sequence>
<name>SPRT_ECOUT</name>
<accession>Q1R783</accession>
<dbReference type="EMBL" id="CP000243">
    <property type="protein sequence ID" value="ABE08781.1"/>
    <property type="molecule type" value="Genomic_DNA"/>
</dbReference>
<dbReference type="RefSeq" id="WP_000858396.1">
    <property type="nucleotide sequence ID" value="NZ_CP064825.1"/>
</dbReference>
<dbReference type="SMR" id="Q1R783"/>
<dbReference type="KEGG" id="eci:UTI89_C3333"/>
<dbReference type="HOGENOM" id="CLU_113336_0_1_6"/>
<dbReference type="Proteomes" id="UP000001952">
    <property type="component" value="Chromosome"/>
</dbReference>
<dbReference type="GO" id="GO:0005737">
    <property type="term" value="C:cytoplasm"/>
    <property type="evidence" value="ECO:0007669"/>
    <property type="project" value="UniProtKB-SubCell"/>
</dbReference>
<dbReference type="GO" id="GO:0008270">
    <property type="term" value="F:zinc ion binding"/>
    <property type="evidence" value="ECO:0007669"/>
    <property type="project" value="UniProtKB-UniRule"/>
</dbReference>
<dbReference type="GO" id="GO:0006950">
    <property type="term" value="P:response to stress"/>
    <property type="evidence" value="ECO:0007669"/>
    <property type="project" value="UniProtKB-ARBA"/>
</dbReference>
<dbReference type="Gene3D" id="3.30.2010.10">
    <property type="entry name" value="Metalloproteases ('zincins'), catalytic domain"/>
    <property type="match status" value="1"/>
</dbReference>
<dbReference type="HAMAP" id="MF_00746">
    <property type="entry name" value="SprT"/>
    <property type="match status" value="1"/>
</dbReference>
<dbReference type="InterPro" id="IPR006640">
    <property type="entry name" value="SprT-like_domain"/>
</dbReference>
<dbReference type="InterPro" id="IPR035240">
    <property type="entry name" value="SprT_Zn_ribbon"/>
</dbReference>
<dbReference type="InterPro" id="IPR023483">
    <property type="entry name" value="Uncharacterised_SprT"/>
</dbReference>
<dbReference type="NCBIfam" id="NF003421">
    <property type="entry name" value="PRK04860.1"/>
    <property type="match status" value="1"/>
</dbReference>
<dbReference type="PANTHER" id="PTHR38773">
    <property type="entry name" value="PROTEIN SPRT"/>
    <property type="match status" value="1"/>
</dbReference>
<dbReference type="PANTHER" id="PTHR38773:SF1">
    <property type="entry name" value="PROTEIN SPRT"/>
    <property type="match status" value="1"/>
</dbReference>
<dbReference type="Pfam" id="PF10263">
    <property type="entry name" value="SprT-like"/>
    <property type="match status" value="1"/>
</dbReference>
<dbReference type="Pfam" id="PF17283">
    <property type="entry name" value="Zn_ribbon_SprT"/>
    <property type="match status" value="1"/>
</dbReference>
<dbReference type="SMART" id="SM00731">
    <property type="entry name" value="SprT"/>
    <property type="match status" value="1"/>
</dbReference>
<dbReference type="PROSITE" id="PS00142">
    <property type="entry name" value="ZINC_PROTEASE"/>
    <property type="match status" value="1"/>
</dbReference>
<gene>
    <name evidence="1" type="primary">sprT</name>
    <name type="ordered locus">UTI89_C3333</name>
</gene>